<dbReference type="EC" id="6.3.5.4"/>
<dbReference type="EMBL" id="U38940">
    <property type="protein sequence ID" value="AAA85125.1"/>
    <property type="molecule type" value="mRNA"/>
</dbReference>
<dbReference type="EMBL" id="AK076207">
    <property type="protein sequence ID" value="BAC36254.1"/>
    <property type="molecule type" value="mRNA"/>
</dbReference>
<dbReference type="EMBL" id="AK167524">
    <property type="protein sequence ID" value="BAE39594.1"/>
    <property type="molecule type" value="mRNA"/>
</dbReference>
<dbReference type="EMBL" id="BC005552">
    <property type="protein sequence ID" value="AAH05552.1"/>
    <property type="molecule type" value="mRNA"/>
</dbReference>
<dbReference type="CCDS" id="CCDS19907.1"/>
<dbReference type="RefSeq" id="NP_001397534.1">
    <property type="nucleotide sequence ID" value="NM_001410605.1"/>
</dbReference>
<dbReference type="RefSeq" id="NP_001397535.1">
    <property type="nucleotide sequence ID" value="NM_001410606.1"/>
</dbReference>
<dbReference type="RefSeq" id="NP_001397536.1">
    <property type="nucleotide sequence ID" value="NM_001410607.1"/>
</dbReference>
<dbReference type="RefSeq" id="NP_001397537.1">
    <property type="nucleotide sequence ID" value="NM_001410608.1"/>
</dbReference>
<dbReference type="RefSeq" id="NP_036185.1">
    <property type="nucleotide sequence ID" value="NM_012055.5"/>
</dbReference>
<dbReference type="RefSeq" id="XP_006505155.1">
    <property type="nucleotide sequence ID" value="XM_006505092.3"/>
</dbReference>
<dbReference type="RefSeq" id="XP_006505156.1">
    <property type="nucleotide sequence ID" value="XM_006505093.3"/>
</dbReference>
<dbReference type="SMR" id="Q61024"/>
<dbReference type="BioGRID" id="205108">
    <property type="interactions" value="22"/>
</dbReference>
<dbReference type="FunCoup" id="Q61024">
    <property type="interactions" value="860"/>
</dbReference>
<dbReference type="IntAct" id="Q61024">
    <property type="interactions" value="2"/>
</dbReference>
<dbReference type="STRING" id="10090.ENSMUSP00000111204"/>
<dbReference type="ChEMBL" id="CHEMBL3243906"/>
<dbReference type="MEROPS" id="C44.974"/>
<dbReference type="GlyGen" id="Q61024">
    <property type="glycosylation" value="1 site, 1 O-linked glycan (1 site)"/>
</dbReference>
<dbReference type="iPTMnet" id="Q61024"/>
<dbReference type="PhosphoSitePlus" id="Q61024"/>
<dbReference type="SwissPalm" id="Q61024"/>
<dbReference type="jPOST" id="Q61024"/>
<dbReference type="PaxDb" id="10090-ENSMUSP00000031766"/>
<dbReference type="PeptideAtlas" id="Q61024"/>
<dbReference type="ProteomicsDB" id="281921"/>
<dbReference type="Pumba" id="Q61024"/>
<dbReference type="Antibodypedia" id="30203">
    <property type="antibodies" value="397 antibodies from 35 providers"/>
</dbReference>
<dbReference type="DNASU" id="27053"/>
<dbReference type="Ensembl" id="ENSMUST00000031766.12">
    <property type="protein sequence ID" value="ENSMUSP00000031766.6"/>
    <property type="gene ID" value="ENSMUSG00000029752.13"/>
</dbReference>
<dbReference type="Ensembl" id="ENSMUST00000115542.8">
    <property type="protein sequence ID" value="ENSMUSP00000111204.2"/>
    <property type="gene ID" value="ENSMUSG00000029752.13"/>
</dbReference>
<dbReference type="GeneID" id="27053"/>
<dbReference type="KEGG" id="mmu:27053"/>
<dbReference type="UCSC" id="uc009axf.1">
    <property type="organism name" value="mouse"/>
</dbReference>
<dbReference type="AGR" id="MGI:1350929"/>
<dbReference type="CTD" id="440"/>
<dbReference type="MGI" id="MGI:1350929">
    <property type="gene designation" value="Asns"/>
</dbReference>
<dbReference type="VEuPathDB" id="HostDB:ENSMUSG00000029752"/>
<dbReference type="eggNOG" id="KOG0571">
    <property type="taxonomic scope" value="Eukaryota"/>
</dbReference>
<dbReference type="GeneTree" id="ENSGT00390000001994"/>
<dbReference type="HOGENOM" id="CLU_014658_2_1_1"/>
<dbReference type="InParanoid" id="Q61024"/>
<dbReference type="OMA" id="HYLNFHA"/>
<dbReference type="OrthoDB" id="409189at2759"/>
<dbReference type="PhylomeDB" id="Q61024"/>
<dbReference type="TreeFam" id="TF300603"/>
<dbReference type="Reactome" id="R-MMU-8963693">
    <property type="pathway name" value="Aspartate and asparagine metabolism"/>
</dbReference>
<dbReference type="UniPathway" id="UPA00134">
    <property type="reaction ID" value="UER00195"/>
</dbReference>
<dbReference type="BioGRID-ORCS" id="27053">
    <property type="hits" value="2 hits in 79 CRISPR screens"/>
</dbReference>
<dbReference type="PRO" id="PR:Q61024"/>
<dbReference type="Proteomes" id="UP000000589">
    <property type="component" value="Chromosome 6"/>
</dbReference>
<dbReference type="RNAct" id="Q61024">
    <property type="molecule type" value="protein"/>
</dbReference>
<dbReference type="Bgee" id="ENSMUSG00000029752">
    <property type="expression patterns" value="Expressed in parotid gland and 280 other cell types or tissues"/>
</dbReference>
<dbReference type="ExpressionAtlas" id="Q61024">
    <property type="expression patterns" value="baseline and differential"/>
</dbReference>
<dbReference type="GO" id="GO:0005829">
    <property type="term" value="C:cytosol"/>
    <property type="evidence" value="ECO:0000304"/>
    <property type="project" value="Reactome"/>
</dbReference>
<dbReference type="GO" id="GO:0004066">
    <property type="term" value="F:asparagine synthase (glutamine-hydrolyzing) activity"/>
    <property type="evidence" value="ECO:0000266"/>
    <property type="project" value="MGI"/>
</dbReference>
<dbReference type="GO" id="GO:0005524">
    <property type="term" value="F:ATP binding"/>
    <property type="evidence" value="ECO:0007669"/>
    <property type="project" value="UniProtKB-KW"/>
</dbReference>
<dbReference type="GO" id="GO:0006529">
    <property type="term" value="P:asparagine biosynthetic process"/>
    <property type="evidence" value="ECO:0000266"/>
    <property type="project" value="MGI"/>
</dbReference>
<dbReference type="GO" id="GO:0042149">
    <property type="term" value="P:cellular response to glucose starvation"/>
    <property type="evidence" value="ECO:0007669"/>
    <property type="project" value="Ensembl"/>
</dbReference>
<dbReference type="GO" id="GO:0070981">
    <property type="term" value="P:L-asparagine biosynthetic process"/>
    <property type="evidence" value="ECO:0007669"/>
    <property type="project" value="UniProtKB-UniPathway"/>
</dbReference>
<dbReference type="GO" id="GO:0043066">
    <property type="term" value="P:negative regulation of apoptotic process"/>
    <property type="evidence" value="ECO:0007669"/>
    <property type="project" value="Ensembl"/>
</dbReference>
<dbReference type="GO" id="GO:0045931">
    <property type="term" value="P:positive regulation of mitotic cell cycle"/>
    <property type="evidence" value="ECO:0007669"/>
    <property type="project" value="Ensembl"/>
</dbReference>
<dbReference type="CDD" id="cd01991">
    <property type="entry name" value="Asn_synthase_B_C"/>
    <property type="match status" value="1"/>
</dbReference>
<dbReference type="CDD" id="cd00712">
    <property type="entry name" value="AsnB"/>
    <property type="match status" value="1"/>
</dbReference>
<dbReference type="FunFam" id="3.60.20.10:FF:000039">
    <property type="entry name" value="Asparagine synthetase [glutamine-hydrolyzing]"/>
    <property type="match status" value="1"/>
</dbReference>
<dbReference type="FunFam" id="3.40.50.620:FF:000090">
    <property type="entry name" value="asparagine synthetase [glutamine-hydrolyzing]"/>
    <property type="match status" value="1"/>
</dbReference>
<dbReference type="Gene3D" id="3.60.20.10">
    <property type="entry name" value="Glutamine Phosphoribosylpyrophosphate, subunit 1, domain 1"/>
    <property type="match status" value="1"/>
</dbReference>
<dbReference type="Gene3D" id="3.40.50.620">
    <property type="entry name" value="HUPs"/>
    <property type="match status" value="1"/>
</dbReference>
<dbReference type="InterPro" id="IPR006426">
    <property type="entry name" value="Asn_synth_AEB"/>
</dbReference>
<dbReference type="InterPro" id="IPR001962">
    <property type="entry name" value="Asn_synthase"/>
</dbReference>
<dbReference type="InterPro" id="IPR050795">
    <property type="entry name" value="Asn_Synthetase"/>
</dbReference>
<dbReference type="InterPro" id="IPR033738">
    <property type="entry name" value="AsnB_N"/>
</dbReference>
<dbReference type="InterPro" id="IPR017932">
    <property type="entry name" value="GATase_2_dom"/>
</dbReference>
<dbReference type="InterPro" id="IPR029055">
    <property type="entry name" value="Ntn_hydrolases_N"/>
</dbReference>
<dbReference type="InterPro" id="IPR014729">
    <property type="entry name" value="Rossmann-like_a/b/a_fold"/>
</dbReference>
<dbReference type="NCBIfam" id="TIGR01536">
    <property type="entry name" value="asn_synth_AEB"/>
    <property type="match status" value="1"/>
</dbReference>
<dbReference type="NCBIfam" id="NF006949">
    <property type="entry name" value="PRK09431.1"/>
    <property type="match status" value="1"/>
</dbReference>
<dbReference type="PANTHER" id="PTHR11772">
    <property type="entry name" value="ASPARAGINE SYNTHETASE"/>
    <property type="match status" value="1"/>
</dbReference>
<dbReference type="PANTHER" id="PTHR11772:SF23">
    <property type="entry name" value="ASPARAGINE SYNTHETASE [GLUTAMINE-HYDROLYZING]"/>
    <property type="match status" value="1"/>
</dbReference>
<dbReference type="Pfam" id="PF00733">
    <property type="entry name" value="Asn_synthase"/>
    <property type="match status" value="2"/>
</dbReference>
<dbReference type="Pfam" id="PF13537">
    <property type="entry name" value="GATase_7"/>
    <property type="match status" value="1"/>
</dbReference>
<dbReference type="PIRSF" id="PIRSF001589">
    <property type="entry name" value="Asn_synthetase_glu-h"/>
    <property type="match status" value="1"/>
</dbReference>
<dbReference type="SUPFAM" id="SSF52402">
    <property type="entry name" value="Adenine nucleotide alpha hydrolases-like"/>
    <property type="match status" value="1"/>
</dbReference>
<dbReference type="SUPFAM" id="SSF56235">
    <property type="entry name" value="N-terminal nucleophile aminohydrolases (Ntn hydrolases)"/>
    <property type="match status" value="1"/>
</dbReference>
<dbReference type="PROSITE" id="PS51278">
    <property type="entry name" value="GATASE_TYPE_2"/>
    <property type="match status" value="1"/>
</dbReference>
<accession>Q61024</accession>
<accession>Q3TJA1</accession>
<accession>Q8BPC8</accession>
<feature type="initiator methionine" description="Removed" evidence="1">
    <location>
        <position position="1"/>
    </location>
</feature>
<feature type="chain" id="PRO_0000056912" description="Asparagine synthetase [glutamine-hydrolyzing]">
    <location>
        <begin position="2"/>
        <end position="561"/>
    </location>
</feature>
<feature type="domain" description="Glutamine amidotransferase type-2" evidence="3">
    <location>
        <begin position="2"/>
        <end position="191"/>
    </location>
</feature>
<feature type="domain" description="Asparagine synthetase">
    <location>
        <begin position="213"/>
        <end position="536"/>
    </location>
</feature>
<feature type="active site" description="For GATase activity" evidence="1">
    <location>
        <position position="2"/>
    </location>
</feature>
<feature type="binding site" evidence="1">
    <location>
        <begin position="49"/>
        <end position="53"/>
    </location>
    <ligand>
        <name>L-glutamine</name>
        <dbReference type="ChEBI" id="CHEBI:58359"/>
    </ligand>
</feature>
<feature type="binding site" evidence="1">
    <location>
        <begin position="75"/>
        <end position="77"/>
    </location>
    <ligand>
        <name>L-glutamine</name>
        <dbReference type="ChEBI" id="CHEBI:58359"/>
    </ligand>
</feature>
<feature type="binding site" evidence="1">
    <location>
        <position position="97"/>
    </location>
    <ligand>
        <name>L-glutamine</name>
        <dbReference type="ChEBI" id="CHEBI:58359"/>
    </ligand>
</feature>
<feature type="binding site" evidence="1">
    <location>
        <position position="256"/>
    </location>
    <ligand>
        <name>ATP</name>
        <dbReference type="ChEBI" id="CHEBI:30616"/>
    </ligand>
</feature>
<feature type="binding site" evidence="1">
    <location>
        <position position="288"/>
    </location>
    <ligand>
        <name>ATP</name>
        <dbReference type="ChEBI" id="CHEBI:30616"/>
    </ligand>
</feature>
<feature type="binding site" evidence="1">
    <location>
        <begin position="363"/>
        <end position="364"/>
    </location>
    <ligand>
        <name>ATP</name>
        <dbReference type="ChEBI" id="CHEBI:30616"/>
    </ligand>
</feature>
<feature type="site" description="Important for beta-aspartyl-AMP intermediate formation" evidence="1">
    <location>
        <position position="365"/>
    </location>
</feature>
<feature type="modified residue" description="N6-acetyllysine" evidence="2">
    <location>
        <position position="385"/>
    </location>
</feature>
<feature type="modified residue" description="Phosphothreonine" evidence="2">
    <location>
        <position position="545"/>
    </location>
</feature>
<feature type="modified residue" description="Phosphoserine" evidence="2">
    <location>
        <position position="557"/>
    </location>
</feature>
<feature type="sequence conflict" description="In Ref. 2; BAC36254." evidence="5" ref="2">
    <original>W</original>
    <variation>G</variation>
    <location>
        <position position="5"/>
    </location>
</feature>
<organism>
    <name type="scientific">Mus musculus</name>
    <name type="common">Mouse</name>
    <dbReference type="NCBI Taxonomy" id="10090"/>
    <lineage>
        <taxon>Eukaryota</taxon>
        <taxon>Metazoa</taxon>
        <taxon>Chordata</taxon>
        <taxon>Craniata</taxon>
        <taxon>Vertebrata</taxon>
        <taxon>Euteleostomi</taxon>
        <taxon>Mammalia</taxon>
        <taxon>Eutheria</taxon>
        <taxon>Euarchontoglires</taxon>
        <taxon>Glires</taxon>
        <taxon>Rodentia</taxon>
        <taxon>Myomorpha</taxon>
        <taxon>Muroidea</taxon>
        <taxon>Muridae</taxon>
        <taxon>Murinae</taxon>
        <taxon>Mus</taxon>
        <taxon>Mus</taxon>
    </lineage>
</organism>
<proteinExistence type="evidence at protein level"/>
<name>ASNS_MOUSE</name>
<protein>
    <recommendedName>
        <fullName>Asparagine synthetase [glutamine-hydrolyzing]</fullName>
        <ecNumber>6.3.5.4</ecNumber>
    </recommendedName>
    <alternativeName>
        <fullName>Glutamine-dependent asparagine synthetase</fullName>
    </alternativeName>
</protein>
<gene>
    <name type="primary">Asns</name>
</gene>
<sequence>MCGIWALFGSDDCLSVQCLSAMKIAHRGPDAFRFENVNGYTNCCFGFHRLAVVDPLFGMQPIRVRKYPYLWLCYNGEIYNHKALQQRFEFEYQTNVDGEIILHLYDKGGIEKTICMLDGVFAFILLDTANKKVFLGRDTYGVRPLFKAMTEDGFLAVCSEAKGLVSLKHSTTPFLKVEPFLPGHYEVLDLKPNGKVASVEMVKYHHCTDEPLHAIYDSVEKLFPGFDLETVKNNLRILFDNAIKKRLMTDRRIGCLLSGGLDSSLVAASLLKQLKEAQVQYPLQTFAIGMEDSPDLLAARKVANYIGSEHHEVLFNSEEGIQALDEVIFSLETYDITTVRASVGMYLISKYIRKNTDSVVIFSGEGSDELTQGYIYFHKAPSPEKAEEESERLLKELYLFDVLRADRTTAAHGLELRVPFLDHRFSSYYLSLPPDMRIPKNGIEKHLLRETFEDCNLLPKEILWRPKEAFSDGITSVKNSWFKILQDYVEHQVDDEMMSAASQKFPFNTPKTKEGYFYRQIFERHYPGRADWLTHYWMPKWINATDPSARTLTHYKSAAKA</sequence>
<evidence type="ECO:0000250" key="1"/>
<evidence type="ECO:0000250" key="2">
    <source>
        <dbReference type="UniProtKB" id="P08243"/>
    </source>
</evidence>
<evidence type="ECO:0000255" key="3">
    <source>
        <dbReference type="PROSITE-ProRule" id="PRU00609"/>
    </source>
</evidence>
<evidence type="ECO:0000269" key="4">
    <source>
    </source>
</evidence>
<evidence type="ECO:0000305" key="5"/>
<comment type="catalytic activity">
    <reaction>
        <text>L-aspartate + L-glutamine + ATP + H2O = L-asparagine + L-glutamate + AMP + diphosphate + H(+)</text>
        <dbReference type="Rhea" id="RHEA:12228"/>
        <dbReference type="ChEBI" id="CHEBI:15377"/>
        <dbReference type="ChEBI" id="CHEBI:15378"/>
        <dbReference type="ChEBI" id="CHEBI:29985"/>
        <dbReference type="ChEBI" id="CHEBI:29991"/>
        <dbReference type="ChEBI" id="CHEBI:30616"/>
        <dbReference type="ChEBI" id="CHEBI:33019"/>
        <dbReference type="ChEBI" id="CHEBI:58048"/>
        <dbReference type="ChEBI" id="CHEBI:58359"/>
        <dbReference type="ChEBI" id="CHEBI:456215"/>
        <dbReference type="EC" id="6.3.5.4"/>
    </reaction>
</comment>
<comment type="pathway">
    <text>Amino-acid biosynthesis; L-asparagine biosynthesis; L-asparagine from L-aspartate (L-Gln route): step 1/1.</text>
</comment>
<comment type="disruption phenotype">
    <text evidence="4">Mice carrying a gene trap insertion in the gene express 20% of the normal level of mRNA. The hypomorphic mutant displays a number of defects that mirror ASNSD syndrome, although the phenotype is milder. Mice have structural brain abnormalities, including reduced cortical thickness and enlarged ventricles. Mutant mice also show deficits in learning and memory. Mutant mice do not show abnormal motor activity or seizure activity.</text>
</comment>
<reference key="1">
    <citation type="submission" date="1995-10" db="EMBL/GenBank/DDBJ databases">
        <authorList>
            <person name="Goodwin L."/>
            <person name="Sellati L."/>
            <person name="Millan C."/>
            <person name="Guzowski D."/>
            <person name="Leeds N."/>
            <person name="Broome J."/>
            <person name="Pergolizzi R."/>
        </authorList>
    </citation>
    <scope>NUCLEOTIDE SEQUENCE [MRNA]</scope>
    <source>
        <strain>C57BL/6J</strain>
        <tissue>Liver</tissue>
    </source>
</reference>
<reference key="2">
    <citation type="journal article" date="2005" name="Science">
        <title>The transcriptional landscape of the mammalian genome.</title>
        <authorList>
            <person name="Carninci P."/>
            <person name="Kasukawa T."/>
            <person name="Katayama S."/>
            <person name="Gough J."/>
            <person name="Frith M.C."/>
            <person name="Maeda N."/>
            <person name="Oyama R."/>
            <person name="Ravasi T."/>
            <person name="Lenhard B."/>
            <person name="Wells C."/>
            <person name="Kodzius R."/>
            <person name="Shimokawa K."/>
            <person name="Bajic V.B."/>
            <person name="Brenner S.E."/>
            <person name="Batalov S."/>
            <person name="Forrest A.R."/>
            <person name="Zavolan M."/>
            <person name="Davis M.J."/>
            <person name="Wilming L.G."/>
            <person name="Aidinis V."/>
            <person name="Allen J.E."/>
            <person name="Ambesi-Impiombato A."/>
            <person name="Apweiler R."/>
            <person name="Aturaliya R.N."/>
            <person name="Bailey T.L."/>
            <person name="Bansal M."/>
            <person name="Baxter L."/>
            <person name="Beisel K.W."/>
            <person name="Bersano T."/>
            <person name="Bono H."/>
            <person name="Chalk A.M."/>
            <person name="Chiu K.P."/>
            <person name="Choudhary V."/>
            <person name="Christoffels A."/>
            <person name="Clutterbuck D.R."/>
            <person name="Crowe M.L."/>
            <person name="Dalla E."/>
            <person name="Dalrymple B.P."/>
            <person name="de Bono B."/>
            <person name="Della Gatta G."/>
            <person name="di Bernardo D."/>
            <person name="Down T."/>
            <person name="Engstrom P."/>
            <person name="Fagiolini M."/>
            <person name="Faulkner G."/>
            <person name="Fletcher C.F."/>
            <person name="Fukushima T."/>
            <person name="Furuno M."/>
            <person name="Futaki S."/>
            <person name="Gariboldi M."/>
            <person name="Georgii-Hemming P."/>
            <person name="Gingeras T.R."/>
            <person name="Gojobori T."/>
            <person name="Green R.E."/>
            <person name="Gustincich S."/>
            <person name="Harbers M."/>
            <person name="Hayashi Y."/>
            <person name="Hensch T.K."/>
            <person name="Hirokawa N."/>
            <person name="Hill D."/>
            <person name="Huminiecki L."/>
            <person name="Iacono M."/>
            <person name="Ikeo K."/>
            <person name="Iwama A."/>
            <person name="Ishikawa T."/>
            <person name="Jakt M."/>
            <person name="Kanapin A."/>
            <person name="Katoh M."/>
            <person name="Kawasawa Y."/>
            <person name="Kelso J."/>
            <person name="Kitamura H."/>
            <person name="Kitano H."/>
            <person name="Kollias G."/>
            <person name="Krishnan S.P."/>
            <person name="Kruger A."/>
            <person name="Kummerfeld S.K."/>
            <person name="Kurochkin I.V."/>
            <person name="Lareau L.F."/>
            <person name="Lazarevic D."/>
            <person name="Lipovich L."/>
            <person name="Liu J."/>
            <person name="Liuni S."/>
            <person name="McWilliam S."/>
            <person name="Madan Babu M."/>
            <person name="Madera M."/>
            <person name="Marchionni L."/>
            <person name="Matsuda H."/>
            <person name="Matsuzawa S."/>
            <person name="Miki H."/>
            <person name="Mignone F."/>
            <person name="Miyake S."/>
            <person name="Morris K."/>
            <person name="Mottagui-Tabar S."/>
            <person name="Mulder N."/>
            <person name="Nakano N."/>
            <person name="Nakauchi H."/>
            <person name="Ng P."/>
            <person name="Nilsson R."/>
            <person name="Nishiguchi S."/>
            <person name="Nishikawa S."/>
            <person name="Nori F."/>
            <person name="Ohara O."/>
            <person name="Okazaki Y."/>
            <person name="Orlando V."/>
            <person name="Pang K.C."/>
            <person name="Pavan W.J."/>
            <person name="Pavesi G."/>
            <person name="Pesole G."/>
            <person name="Petrovsky N."/>
            <person name="Piazza S."/>
            <person name="Reed J."/>
            <person name="Reid J.F."/>
            <person name="Ring B.Z."/>
            <person name="Ringwald M."/>
            <person name="Rost B."/>
            <person name="Ruan Y."/>
            <person name="Salzberg S.L."/>
            <person name="Sandelin A."/>
            <person name="Schneider C."/>
            <person name="Schoenbach C."/>
            <person name="Sekiguchi K."/>
            <person name="Semple C.A."/>
            <person name="Seno S."/>
            <person name="Sessa L."/>
            <person name="Sheng Y."/>
            <person name="Shibata Y."/>
            <person name="Shimada H."/>
            <person name="Shimada K."/>
            <person name="Silva D."/>
            <person name="Sinclair B."/>
            <person name="Sperling S."/>
            <person name="Stupka E."/>
            <person name="Sugiura K."/>
            <person name="Sultana R."/>
            <person name="Takenaka Y."/>
            <person name="Taki K."/>
            <person name="Tammoja K."/>
            <person name="Tan S.L."/>
            <person name="Tang S."/>
            <person name="Taylor M.S."/>
            <person name="Tegner J."/>
            <person name="Teichmann S.A."/>
            <person name="Ueda H.R."/>
            <person name="van Nimwegen E."/>
            <person name="Verardo R."/>
            <person name="Wei C.L."/>
            <person name="Yagi K."/>
            <person name="Yamanishi H."/>
            <person name="Zabarovsky E."/>
            <person name="Zhu S."/>
            <person name="Zimmer A."/>
            <person name="Hide W."/>
            <person name="Bult C."/>
            <person name="Grimmond S.M."/>
            <person name="Teasdale R.D."/>
            <person name="Liu E.T."/>
            <person name="Brusic V."/>
            <person name="Quackenbush J."/>
            <person name="Wahlestedt C."/>
            <person name="Mattick J.S."/>
            <person name="Hume D.A."/>
            <person name="Kai C."/>
            <person name="Sasaki D."/>
            <person name="Tomaru Y."/>
            <person name="Fukuda S."/>
            <person name="Kanamori-Katayama M."/>
            <person name="Suzuki M."/>
            <person name="Aoki J."/>
            <person name="Arakawa T."/>
            <person name="Iida J."/>
            <person name="Imamura K."/>
            <person name="Itoh M."/>
            <person name="Kato T."/>
            <person name="Kawaji H."/>
            <person name="Kawagashira N."/>
            <person name="Kawashima T."/>
            <person name="Kojima M."/>
            <person name="Kondo S."/>
            <person name="Konno H."/>
            <person name="Nakano K."/>
            <person name="Ninomiya N."/>
            <person name="Nishio T."/>
            <person name="Okada M."/>
            <person name="Plessy C."/>
            <person name="Shibata K."/>
            <person name="Shiraki T."/>
            <person name="Suzuki S."/>
            <person name="Tagami M."/>
            <person name="Waki K."/>
            <person name="Watahiki A."/>
            <person name="Okamura-Oho Y."/>
            <person name="Suzuki H."/>
            <person name="Kawai J."/>
            <person name="Hayashizaki Y."/>
        </authorList>
    </citation>
    <scope>NUCLEOTIDE SEQUENCE [LARGE SCALE MRNA]</scope>
    <source>
        <strain>C57BL/6J</strain>
        <tissue>Placenta</tissue>
    </source>
</reference>
<reference key="3">
    <citation type="journal article" date="2004" name="Genome Res.">
        <title>The status, quality, and expansion of the NIH full-length cDNA project: the Mammalian Gene Collection (MGC).</title>
        <authorList>
            <consortium name="The MGC Project Team"/>
        </authorList>
    </citation>
    <scope>NUCLEOTIDE SEQUENCE [LARGE SCALE MRNA]</scope>
    <source>
        <strain>FVB/N</strain>
        <tissue>Mammary gland</tissue>
    </source>
</reference>
<reference key="4">
    <citation type="journal article" date="2010" name="Cell">
        <title>A tissue-specific atlas of mouse protein phosphorylation and expression.</title>
        <authorList>
            <person name="Huttlin E.L."/>
            <person name="Jedrychowski M.P."/>
            <person name="Elias J.E."/>
            <person name="Goswami T."/>
            <person name="Rad R."/>
            <person name="Beausoleil S.A."/>
            <person name="Villen J."/>
            <person name="Haas W."/>
            <person name="Sowa M.E."/>
            <person name="Gygi S.P."/>
        </authorList>
    </citation>
    <scope>IDENTIFICATION BY MASS SPECTROMETRY [LARGE SCALE ANALYSIS]</scope>
    <source>
        <tissue>Brain</tissue>
        <tissue>Brown adipose tissue</tissue>
        <tissue>Lung</tissue>
        <tissue>Pancreas</tissue>
        <tissue>Spleen</tissue>
        <tissue>Testis</tissue>
    </source>
</reference>
<reference key="5">
    <citation type="journal article" date="2013" name="Neuron">
        <title>Deficiency of asparagine synthetase causes congenital microcephaly and a progressive form of encephalopathy.</title>
        <authorList>
            <person name="Ruzzo E.K."/>
            <person name="Capo-Chichi J.M."/>
            <person name="Ben-Zeev B."/>
            <person name="Chitayat D."/>
            <person name="Mao H."/>
            <person name="Pappas A.L."/>
            <person name="Hitomi Y."/>
            <person name="Lu Y.F."/>
            <person name="Yao X."/>
            <person name="Hamdan F.F."/>
            <person name="Pelak K."/>
            <person name="Reznik-Wolf H."/>
            <person name="Bar-Joseph I."/>
            <person name="Oz-Levi D."/>
            <person name="Lev D."/>
            <person name="Lerman-Sagie T."/>
            <person name="Leshinsky-Silver E."/>
            <person name="Anikster Y."/>
            <person name="Ben-Asher E."/>
            <person name="Olender T."/>
            <person name="Colleaux L."/>
            <person name="Decarie J.C."/>
            <person name="Blaser S."/>
            <person name="Banwell B."/>
            <person name="Joshi R.B."/>
            <person name="He X.P."/>
            <person name="Patry L."/>
            <person name="Silver R.J."/>
            <person name="Dobrzeniecka S."/>
            <person name="Islam M.S."/>
            <person name="Hasnat A."/>
            <person name="Samuels M.E."/>
            <person name="Aryal D.K."/>
            <person name="Rodriguiz R.M."/>
            <person name="Jiang Y.H."/>
            <person name="Wetsel W.C."/>
            <person name="McNamara J.O."/>
            <person name="Rouleau G.A."/>
            <person name="Silver D.L."/>
            <person name="Lancet D."/>
            <person name="Pras E."/>
            <person name="Mitchell G.A."/>
            <person name="Michaud J.L."/>
            <person name="Goldstein D.B."/>
        </authorList>
    </citation>
    <scope>DISRUPTION PHENOTYPE</scope>
</reference>
<keyword id="KW-0007">Acetylation</keyword>
<keyword id="KW-0028">Amino-acid biosynthesis</keyword>
<keyword id="KW-0061">Asparagine biosynthesis</keyword>
<keyword id="KW-0067">ATP-binding</keyword>
<keyword id="KW-0315">Glutamine amidotransferase</keyword>
<keyword id="KW-0436">Ligase</keyword>
<keyword id="KW-0547">Nucleotide-binding</keyword>
<keyword id="KW-0597">Phosphoprotein</keyword>
<keyword id="KW-1185">Reference proteome</keyword>